<sequence length="122" mass="13061">MIQQETRLKVADNSGAREILTIKVLGGSGRKFANIGDVIVASVKQATPGGAVKKGDVVKAVIVRTKTGARRPDGSYIKFDDNAAVIIRDDKTPRGTRIFGPVARELREGGYMKIVSLAPEVL</sequence>
<protein>
    <recommendedName>
        <fullName evidence="1">Large ribosomal subunit protein uL14</fullName>
    </recommendedName>
    <alternativeName>
        <fullName evidence="2">50S ribosomal protein L14</fullName>
    </alternativeName>
</protein>
<accession>Q8E2C4</accession>
<name>RL14_STRA5</name>
<gene>
    <name evidence="1" type="primary">rplN</name>
    <name type="ordered locus">SAG0068</name>
</gene>
<reference key="1">
    <citation type="journal article" date="2002" name="Proc. Natl. Acad. Sci. U.S.A.">
        <title>Complete genome sequence and comparative genomic analysis of an emerging human pathogen, serotype V Streptococcus agalactiae.</title>
        <authorList>
            <person name="Tettelin H."/>
            <person name="Masignani V."/>
            <person name="Cieslewicz M.J."/>
            <person name="Eisen J.A."/>
            <person name="Peterson S.N."/>
            <person name="Wessels M.R."/>
            <person name="Paulsen I.T."/>
            <person name="Nelson K.E."/>
            <person name="Margarit I."/>
            <person name="Read T.D."/>
            <person name="Madoff L.C."/>
            <person name="Wolf A.M."/>
            <person name="Beanan M.J."/>
            <person name="Brinkac L.M."/>
            <person name="Daugherty S.C."/>
            <person name="DeBoy R.T."/>
            <person name="Durkin A.S."/>
            <person name="Kolonay J.F."/>
            <person name="Madupu R."/>
            <person name="Lewis M.R."/>
            <person name="Radune D."/>
            <person name="Fedorova N.B."/>
            <person name="Scanlan D."/>
            <person name="Khouri H.M."/>
            <person name="Mulligan S."/>
            <person name="Carty H.A."/>
            <person name="Cline R.T."/>
            <person name="Van Aken S.E."/>
            <person name="Gill J."/>
            <person name="Scarselli M."/>
            <person name="Mora M."/>
            <person name="Iacobini E.T."/>
            <person name="Brettoni C."/>
            <person name="Galli G."/>
            <person name="Mariani M."/>
            <person name="Vegni F."/>
            <person name="Maione D."/>
            <person name="Rinaudo D."/>
            <person name="Rappuoli R."/>
            <person name="Telford J.L."/>
            <person name="Kasper D.L."/>
            <person name="Grandi G."/>
            <person name="Fraser C.M."/>
        </authorList>
    </citation>
    <scope>NUCLEOTIDE SEQUENCE [LARGE SCALE GENOMIC DNA]</scope>
    <source>
        <strain>ATCC BAA-611 / 2603 V/R</strain>
    </source>
</reference>
<evidence type="ECO:0000255" key="1">
    <source>
        <dbReference type="HAMAP-Rule" id="MF_01367"/>
    </source>
</evidence>
<evidence type="ECO:0000305" key="2"/>
<feature type="chain" id="PRO_1000055712" description="Large ribosomal subunit protein uL14">
    <location>
        <begin position="1"/>
        <end position="122"/>
    </location>
</feature>
<proteinExistence type="inferred from homology"/>
<comment type="function">
    <text evidence="1">Binds to 23S rRNA. Forms part of two intersubunit bridges in the 70S ribosome.</text>
</comment>
<comment type="subunit">
    <text evidence="1">Part of the 50S ribosomal subunit. Forms a cluster with proteins L3 and L19. In the 70S ribosome, L14 and L19 interact and together make contacts with the 16S rRNA in bridges B5 and B8.</text>
</comment>
<comment type="similarity">
    <text evidence="1">Belongs to the universal ribosomal protein uL14 family.</text>
</comment>
<dbReference type="EMBL" id="AE009948">
    <property type="protein sequence ID" value="AAM98976.1"/>
    <property type="molecule type" value="Genomic_DNA"/>
</dbReference>
<dbReference type="RefSeq" id="NP_687104.1">
    <property type="nucleotide sequence ID" value="NC_004116.1"/>
</dbReference>
<dbReference type="RefSeq" id="WP_000615920.1">
    <property type="nucleotide sequence ID" value="NC_004116.1"/>
</dbReference>
<dbReference type="SMR" id="Q8E2C4"/>
<dbReference type="STRING" id="208435.SAG0068"/>
<dbReference type="GeneID" id="83689563"/>
<dbReference type="KEGG" id="sag:SAG0068"/>
<dbReference type="PATRIC" id="fig|208435.3.peg.67"/>
<dbReference type="HOGENOM" id="CLU_095071_2_1_9"/>
<dbReference type="OrthoDB" id="9806379at2"/>
<dbReference type="PRO" id="PR:Q8E2C4"/>
<dbReference type="Proteomes" id="UP000000821">
    <property type="component" value="Chromosome"/>
</dbReference>
<dbReference type="GO" id="GO:0022625">
    <property type="term" value="C:cytosolic large ribosomal subunit"/>
    <property type="evidence" value="ECO:0007669"/>
    <property type="project" value="TreeGrafter"/>
</dbReference>
<dbReference type="GO" id="GO:0070180">
    <property type="term" value="F:large ribosomal subunit rRNA binding"/>
    <property type="evidence" value="ECO:0007669"/>
    <property type="project" value="TreeGrafter"/>
</dbReference>
<dbReference type="GO" id="GO:0003735">
    <property type="term" value="F:structural constituent of ribosome"/>
    <property type="evidence" value="ECO:0007669"/>
    <property type="project" value="InterPro"/>
</dbReference>
<dbReference type="GO" id="GO:0006412">
    <property type="term" value="P:translation"/>
    <property type="evidence" value="ECO:0007669"/>
    <property type="project" value="UniProtKB-UniRule"/>
</dbReference>
<dbReference type="CDD" id="cd00337">
    <property type="entry name" value="Ribosomal_uL14"/>
    <property type="match status" value="1"/>
</dbReference>
<dbReference type="FunFam" id="2.40.150.20:FF:000001">
    <property type="entry name" value="50S ribosomal protein L14"/>
    <property type="match status" value="1"/>
</dbReference>
<dbReference type="Gene3D" id="2.40.150.20">
    <property type="entry name" value="Ribosomal protein L14"/>
    <property type="match status" value="1"/>
</dbReference>
<dbReference type="HAMAP" id="MF_01367">
    <property type="entry name" value="Ribosomal_uL14"/>
    <property type="match status" value="1"/>
</dbReference>
<dbReference type="InterPro" id="IPR000218">
    <property type="entry name" value="Ribosomal_uL14"/>
</dbReference>
<dbReference type="InterPro" id="IPR005745">
    <property type="entry name" value="Ribosomal_uL14_bac-type"/>
</dbReference>
<dbReference type="InterPro" id="IPR019972">
    <property type="entry name" value="Ribosomal_uL14_CS"/>
</dbReference>
<dbReference type="InterPro" id="IPR036853">
    <property type="entry name" value="Ribosomal_uL14_sf"/>
</dbReference>
<dbReference type="NCBIfam" id="TIGR01067">
    <property type="entry name" value="rplN_bact"/>
    <property type="match status" value="1"/>
</dbReference>
<dbReference type="PANTHER" id="PTHR11761">
    <property type="entry name" value="50S/60S RIBOSOMAL PROTEIN L14/L23"/>
    <property type="match status" value="1"/>
</dbReference>
<dbReference type="PANTHER" id="PTHR11761:SF3">
    <property type="entry name" value="LARGE RIBOSOMAL SUBUNIT PROTEIN UL14M"/>
    <property type="match status" value="1"/>
</dbReference>
<dbReference type="Pfam" id="PF00238">
    <property type="entry name" value="Ribosomal_L14"/>
    <property type="match status" value="1"/>
</dbReference>
<dbReference type="SMART" id="SM01374">
    <property type="entry name" value="Ribosomal_L14"/>
    <property type="match status" value="1"/>
</dbReference>
<dbReference type="SUPFAM" id="SSF50193">
    <property type="entry name" value="Ribosomal protein L14"/>
    <property type="match status" value="1"/>
</dbReference>
<dbReference type="PROSITE" id="PS00049">
    <property type="entry name" value="RIBOSOMAL_L14"/>
    <property type="match status" value="1"/>
</dbReference>
<keyword id="KW-1185">Reference proteome</keyword>
<keyword id="KW-0687">Ribonucleoprotein</keyword>
<keyword id="KW-0689">Ribosomal protein</keyword>
<keyword id="KW-0694">RNA-binding</keyword>
<keyword id="KW-0699">rRNA-binding</keyword>
<organism>
    <name type="scientific">Streptococcus agalactiae serotype V (strain ATCC BAA-611 / 2603 V/R)</name>
    <dbReference type="NCBI Taxonomy" id="208435"/>
    <lineage>
        <taxon>Bacteria</taxon>
        <taxon>Bacillati</taxon>
        <taxon>Bacillota</taxon>
        <taxon>Bacilli</taxon>
        <taxon>Lactobacillales</taxon>
        <taxon>Streptococcaceae</taxon>
        <taxon>Streptococcus</taxon>
    </lineage>
</organism>